<dbReference type="EMBL" id="AY187030">
    <property type="protein sequence ID" value="AAO31974.1"/>
    <property type="molecule type" value="mRNA"/>
</dbReference>
<dbReference type="EMBL" id="AY341059">
    <property type="protein sequence ID" value="AAQ16125.1"/>
    <property type="molecule type" value="mRNA"/>
</dbReference>
<dbReference type="EMBL" id="AC022521">
    <property type="protein sequence ID" value="AAG10625.1"/>
    <property type="status" value="ALT_SEQ"/>
    <property type="molecule type" value="Genomic_DNA"/>
</dbReference>
<dbReference type="EMBL" id="CP002684">
    <property type="protein sequence ID" value="AEE27451.1"/>
    <property type="molecule type" value="Genomic_DNA"/>
</dbReference>
<dbReference type="EMBL" id="CP002684">
    <property type="protein sequence ID" value="AEE27452.1"/>
    <property type="molecule type" value="Genomic_DNA"/>
</dbReference>
<dbReference type="EMBL" id="AK221480">
    <property type="protein sequence ID" value="BAD94637.1"/>
    <property type="molecule type" value="mRNA"/>
</dbReference>
<dbReference type="PIR" id="C86156">
    <property type="entry name" value="C86156"/>
</dbReference>
<dbReference type="RefSeq" id="NP_001030934.1">
    <molecule id="Q84XI3-2"/>
    <property type="nucleotide sequence ID" value="NM_001035857.2"/>
</dbReference>
<dbReference type="RefSeq" id="NP_171763.1">
    <molecule id="Q84XI3-1"/>
    <property type="nucleotide sequence ID" value="NM_100143.3"/>
</dbReference>
<dbReference type="SMR" id="Q84XI3"/>
<dbReference type="FunCoup" id="Q84XI3">
    <property type="interactions" value="620"/>
</dbReference>
<dbReference type="STRING" id="3702.Q84XI3"/>
<dbReference type="iPTMnet" id="Q84XI3"/>
<dbReference type="PaxDb" id="3702-AT1G02630.1"/>
<dbReference type="ProteomicsDB" id="220552">
    <molecule id="Q84XI3-1"/>
</dbReference>
<dbReference type="EnsemblPlants" id="AT1G02630.1">
    <molecule id="Q84XI3-1"/>
    <property type="protein sequence ID" value="AT1G02630.1"/>
    <property type="gene ID" value="AT1G02630"/>
</dbReference>
<dbReference type="EnsemblPlants" id="AT1G02630.2">
    <molecule id="Q84XI3-2"/>
    <property type="protein sequence ID" value="AT1G02630.2"/>
    <property type="gene ID" value="AT1G02630"/>
</dbReference>
<dbReference type="GeneID" id="839240"/>
<dbReference type="Gramene" id="AT1G02630.1">
    <molecule id="Q84XI3-1"/>
    <property type="protein sequence ID" value="AT1G02630.1"/>
    <property type="gene ID" value="AT1G02630"/>
</dbReference>
<dbReference type="Gramene" id="AT1G02630.2">
    <molecule id="Q84XI3-2"/>
    <property type="protein sequence ID" value="AT1G02630.2"/>
    <property type="gene ID" value="AT1G02630"/>
</dbReference>
<dbReference type="KEGG" id="ath:AT1G02630"/>
<dbReference type="Araport" id="AT1G02630"/>
<dbReference type="TAIR" id="AT1G02630"/>
<dbReference type="eggNOG" id="KOG1479">
    <property type="taxonomic scope" value="Eukaryota"/>
</dbReference>
<dbReference type="HOGENOM" id="CLU_021611_5_0_1"/>
<dbReference type="InParanoid" id="Q84XI3"/>
<dbReference type="OMA" id="ARGMNEF"/>
<dbReference type="OrthoDB" id="1856718at2759"/>
<dbReference type="PhylomeDB" id="Q84XI3"/>
<dbReference type="PRO" id="PR:Q84XI3"/>
<dbReference type="Proteomes" id="UP000006548">
    <property type="component" value="Chromosome 1"/>
</dbReference>
<dbReference type="ExpressionAtlas" id="Q84XI3">
    <property type="expression patterns" value="baseline and differential"/>
</dbReference>
<dbReference type="GO" id="GO:0005886">
    <property type="term" value="C:plasma membrane"/>
    <property type="evidence" value="ECO:0007669"/>
    <property type="project" value="UniProtKB-SubCell"/>
</dbReference>
<dbReference type="GO" id="GO:0005337">
    <property type="term" value="F:nucleoside transmembrane transporter activity"/>
    <property type="evidence" value="ECO:0007669"/>
    <property type="project" value="InterPro"/>
</dbReference>
<dbReference type="InterPro" id="IPR002259">
    <property type="entry name" value="Eqnu_transpt"/>
</dbReference>
<dbReference type="InterPro" id="IPR036259">
    <property type="entry name" value="MFS_trans_sf"/>
</dbReference>
<dbReference type="PANTHER" id="PTHR10332">
    <property type="entry name" value="EQUILIBRATIVE NUCLEOSIDE TRANSPORTER"/>
    <property type="match status" value="1"/>
</dbReference>
<dbReference type="PANTHER" id="PTHR10332:SF77">
    <property type="entry name" value="EQUILIBRATIVE NUCLEOTIDE TRANSPORTER 8"/>
    <property type="match status" value="1"/>
</dbReference>
<dbReference type="Pfam" id="PF01733">
    <property type="entry name" value="Nucleoside_tran"/>
    <property type="match status" value="2"/>
</dbReference>
<dbReference type="PIRSF" id="PIRSF016379">
    <property type="entry name" value="ENT"/>
    <property type="match status" value="1"/>
</dbReference>
<dbReference type="SUPFAM" id="SSF103473">
    <property type="entry name" value="MFS general substrate transporter"/>
    <property type="match status" value="1"/>
</dbReference>
<name>ENT8_ARATH</name>
<sequence>MVDEKVIVDEVETRDAYRVAYVIHFLLGAGSLIPWNALITAVDYFGYLYPDKHVEKTFTVAYMSCSVLVLVLMMTWNTRMSYRVRMNLGFSMFIIAMMISPLIDWVWKGEKGENVSYMLMVGSVVLCGLADGVVGGSLIGSAGKLPRQYMQAIFAGTASSGIIISLLRIATKASLPQTPQGMRTSAHSYFIVSSTILLCCFISCNVLHKLPVMQQHLKFHQPLHSTLTIWMVGRKIKWPASGMLIIYSVTLSIFPGFIAENLKSQLLQSWYPILLITVYNISDFVGKSLTALYLWQSIKSATWACIVRLLFYPLFSACLRGPKWLRTEVPVVVLTFMLGLTNGYLTSVLMIMAPKTVHASEAELAAIFMVVFLGLGLVCGSVIGWLWLI</sequence>
<evidence type="ECO:0000250" key="1"/>
<evidence type="ECO:0000255" key="2"/>
<evidence type="ECO:0000269" key="3">
    <source>
    </source>
</evidence>
<evidence type="ECO:0000303" key="4">
    <source ref="2"/>
</evidence>
<evidence type="ECO:0000305" key="5"/>
<reference key="1">
    <citation type="journal article" date="2003" name="J. Biol. Chem.">
        <title>Equilibrative nucleoside transporters of Arabidopsis thaliana. cDNA cloning, expression pattern, and analysis of transport activities.</title>
        <authorList>
            <person name="Li G."/>
            <person name="Liu K."/>
            <person name="Baldwin S.A."/>
            <person name="Wang D."/>
        </authorList>
    </citation>
    <scope>NUCLEOTIDE SEQUENCE [MRNA] (ISOFORM 1)</scope>
    <scope>TISSUE SPECIFICITY</scope>
    <scope>INDUCTION</scope>
</reference>
<reference key="2">
    <citation type="submission" date="2003-07" db="EMBL/GenBank/DDBJ databases">
        <title>ENT8 splice variant mRNA.</title>
        <authorList>
            <person name="Li G."/>
            <person name="Liu K."/>
            <person name="Wang D."/>
        </authorList>
    </citation>
    <scope>NUCLEOTIDE SEQUENCE [MRNA] (ISOFORM 2)</scope>
</reference>
<reference key="3">
    <citation type="journal article" date="2000" name="Nature">
        <title>Sequence and analysis of chromosome 1 of the plant Arabidopsis thaliana.</title>
        <authorList>
            <person name="Theologis A."/>
            <person name="Ecker J.R."/>
            <person name="Palm C.J."/>
            <person name="Federspiel N.A."/>
            <person name="Kaul S."/>
            <person name="White O."/>
            <person name="Alonso J."/>
            <person name="Altafi H."/>
            <person name="Araujo R."/>
            <person name="Bowman C.L."/>
            <person name="Brooks S.Y."/>
            <person name="Buehler E."/>
            <person name="Chan A."/>
            <person name="Chao Q."/>
            <person name="Chen H."/>
            <person name="Cheuk R.F."/>
            <person name="Chin C.W."/>
            <person name="Chung M.K."/>
            <person name="Conn L."/>
            <person name="Conway A.B."/>
            <person name="Conway A.R."/>
            <person name="Creasy T.H."/>
            <person name="Dewar K."/>
            <person name="Dunn P."/>
            <person name="Etgu P."/>
            <person name="Feldblyum T.V."/>
            <person name="Feng J.-D."/>
            <person name="Fong B."/>
            <person name="Fujii C.Y."/>
            <person name="Gill J.E."/>
            <person name="Goldsmith A.D."/>
            <person name="Haas B."/>
            <person name="Hansen N.F."/>
            <person name="Hughes B."/>
            <person name="Huizar L."/>
            <person name="Hunter J.L."/>
            <person name="Jenkins J."/>
            <person name="Johnson-Hopson C."/>
            <person name="Khan S."/>
            <person name="Khaykin E."/>
            <person name="Kim C.J."/>
            <person name="Koo H.L."/>
            <person name="Kremenetskaia I."/>
            <person name="Kurtz D.B."/>
            <person name="Kwan A."/>
            <person name="Lam B."/>
            <person name="Langin-Hooper S."/>
            <person name="Lee A."/>
            <person name="Lee J.M."/>
            <person name="Lenz C.A."/>
            <person name="Li J.H."/>
            <person name="Li Y.-P."/>
            <person name="Lin X."/>
            <person name="Liu S.X."/>
            <person name="Liu Z.A."/>
            <person name="Luros J.S."/>
            <person name="Maiti R."/>
            <person name="Marziali A."/>
            <person name="Militscher J."/>
            <person name="Miranda M."/>
            <person name="Nguyen M."/>
            <person name="Nierman W.C."/>
            <person name="Osborne B.I."/>
            <person name="Pai G."/>
            <person name="Peterson J."/>
            <person name="Pham P.K."/>
            <person name="Rizzo M."/>
            <person name="Rooney T."/>
            <person name="Rowley D."/>
            <person name="Sakano H."/>
            <person name="Salzberg S.L."/>
            <person name="Schwartz J.R."/>
            <person name="Shinn P."/>
            <person name="Southwick A.M."/>
            <person name="Sun H."/>
            <person name="Tallon L.J."/>
            <person name="Tambunga G."/>
            <person name="Toriumi M.J."/>
            <person name="Town C.D."/>
            <person name="Utterback T."/>
            <person name="Van Aken S."/>
            <person name="Vaysberg M."/>
            <person name="Vysotskaia V.S."/>
            <person name="Walker M."/>
            <person name="Wu D."/>
            <person name="Yu G."/>
            <person name="Fraser C.M."/>
            <person name="Venter J.C."/>
            <person name="Davis R.W."/>
        </authorList>
    </citation>
    <scope>NUCLEOTIDE SEQUENCE [LARGE SCALE GENOMIC DNA]</scope>
    <source>
        <strain>cv. Columbia</strain>
    </source>
</reference>
<reference key="4">
    <citation type="journal article" date="2017" name="Plant J.">
        <title>Araport11: a complete reannotation of the Arabidopsis thaliana reference genome.</title>
        <authorList>
            <person name="Cheng C.Y."/>
            <person name="Krishnakumar V."/>
            <person name="Chan A.P."/>
            <person name="Thibaud-Nissen F."/>
            <person name="Schobel S."/>
            <person name="Town C.D."/>
        </authorList>
    </citation>
    <scope>GENOME REANNOTATION</scope>
    <source>
        <strain>cv. Columbia</strain>
    </source>
</reference>
<reference key="5">
    <citation type="submission" date="2005-03" db="EMBL/GenBank/DDBJ databases">
        <title>Large-scale analysis of RIKEN Arabidopsis full-length (RAFL) cDNAs.</title>
        <authorList>
            <person name="Totoki Y."/>
            <person name="Seki M."/>
            <person name="Ishida J."/>
            <person name="Nakajima M."/>
            <person name="Enju A."/>
            <person name="Kamiya A."/>
            <person name="Narusaka M."/>
            <person name="Shin-i T."/>
            <person name="Nakagawa M."/>
            <person name="Sakamoto N."/>
            <person name="Oishi K."/>
            <person name="Kohara Y."/>
            <person name="Kobayashi M."/>
            <person name="Toyoda A."/>
            <person name="Sakaki Y."/>
            <person name="Sakurai T."/>
            <person name="Iida K."/>
            <person name="Akiyama K."/>
            <person name="Satou M."/>
            <person name="Toyoda T."/>
            <person name="Konagaya A."/>
            <person name="Carninci P."/>
            <person name="Kawai J."/>
            <person name="Hayashizaki Y."/>
            <person name="Shinozaki K."/>
        </authorList>
    </citation>
    <scope>NUCLEOTIDE SEQUENCE [LARGE SCALE MRNA] (ISOFORM 1)</scope>
    <source>
        <strain>cv. Columbia</strain>
    </source>
</reference>
<keyword id="KW-0025">Alternative splicing</keyword>
<keyword id="KW-1003">Cell membrane</keyword>
<keyword id="KW-0472">Membrane</keyword>
<keyword id="KW-1185">Reference proteome</keyword>
<keyword id="KW-0812">Transmembrane</keyword>
<keyword id="KW-1133">Transmembrane helix</keyword>
<keyword id="KW-0813">Transport</keyword>
<protein>
    <recommendedName>
        <fullName>Equilibrative nucleotide transporter 8</fullName>
        <shortName>AtENT8</shortName>
    </recommendedName>
    <alternativeName>
        <fullName>Nucleoside transporter ENT8</fullName>
    </alternativeName>
</protein>
<proteinExistence type="evidence at transcript level"/>
<feature type="chain" id="PRO_0000419161" description="Equilibrative nucleotide transporter 8">
    <location>
        <begin position="1"/>
        <end position="389"/>
    </location>
</feature>
<feature type="transmembrane region" description="Helical" evidence="2">
    <location>
        <begin position="19"/>
        <end position="39"/>
    </location>
</feature>
<feature type="transmembrane region" description="Helical" evidence="2">
    <location>
        <begin position="57"/>
        <end position="77"/>
    </location>
</feature>
<feature type="transmembrane region" description="Helical" evidence="2">
    <location>
        <begin position="87"/>
        <end position="107"/>
    </location>
</feature>
<feature type="transmembrane region" description="Helical" evidence="2">
    <location>
        <begin position="119"/>
        <end position="139"/>
    </location>
</feature>
<feature type="transmembrane region" description="Helical" evidence="2">
    <location>
        <begin position="150"/>
        <end position="170"/>
    </location>
</feature>
<feature type="transmembrane region" description="Helical" evidence="2">
    <location>
        <begin position="187"/>
        <end position="207"/>
    </location>
</feature>
<feature type="transmembrane region" description="Helical" evidence="2">
    <location>
        <begin position="238"/>
        <end position="258"/>
    </location>
</feature>
<feature type="transmembrane region" description="Helical" evidence="2">
    <location>
        <begin position="266"/>
        <end position="286"/>
    </location>
</feature>
<feature type="transmembrane region" description="Helical" evidence="2">
    <location>
        <begin position="331"/>
        <end position="351"/>
    </location>
</feature>
<feature type="transmembrane region" description="Helical" evidence="2">
    <location>
        <begin position="367"/>
        <end position="387"/>
    </location>
</feature>
<feature type="splice variant" id="VSP_044113" description="In isoform 2." evidence="4">
    <location>
        <begin position="242"/>
        <end position="285"/>
    </location>
</feature>
<accession>Q84XI3</accession>
<accession>Q7XAU2</accession>
<accession>Q9FWY1</accession>
<gene>
    <name type="primary">ETN8</name>
    <name type="ordered locus">At1g02630</name>
    <name type="ORF">T14P4.9</name>
</gene>
<organism>
    <name type="scientific">Arabidopsis thaliana</name>
    <name type="common">Mouse-ear cress</name>
    <dbReference type="NCBI Taxonomy" id="3702"/>
    <lineage>
        <taxon>Eukaryota</taxon>
        <taxon>Viridiplantae</taxon>
        <taxon>Streptophyta</taxon>
        <taxon>Embryophyta</taxon>
        <taxon>Tracheophyta</taxon>
        <taxon>Spermatophyta</taxon>
        <taxon>Magnoliopsida</taxon>
        <taxon>eudicotyledons</taxon>
        <taxon>Gunneridae</taxon>
        <taxon>Pentapetalae</taxon>
        <taxon>rosids</taxon>
        <taxon>malvids</taxon>
        <taxon>Brassicales</taxon>
        <taxon>Brassicaceae</taxon>
        <taxon>Camelineae</taxon>
        <taxon>Arabidopsis</taxon>
    </lineage>
</organism>
<comment type="function">
    <text evidence="1">May be involved in nucleoside transport.</text>
</comment>
<comment type="subcellular location">
    <subcellularLocation>
        <location evidence="1">Cell membrane</location>
        <topology evidence="5">Multi-pass membrane protein</topology>
    </subcellularLocation>
    <text>Plasma membrane.</text>
</comment>
<comment type="alternative products">
    <event type="alternative splicing"/>
    <isoform>
        <id>Q84XI3-1</id>
        <name>1</name>
        <sequence type="displayed"/>
    </isoform>
    <isoform>
        <id>Q84XI3-2</id>
        <name>2</name>
        <sequence type="described" ref="VSP_044113"/>
    </isoform>
</comment>
<comment type="tissue specificity">
    <text evidence="3">Expressed in stems, flowers and siliques.</text>
</comment>
<comment type="induction">
    <text evidence="3">By nitrogen deficiency and 5-fluorouracil plus methotrexate.</text>
</comment>
<comment type="similarity">
    <text evidence="5">Belongs to the SLC29A/ENT transporter (TC 2.A.57) family.</text>
</comment>
<comment type="sequence caution" evidence="5">
    <conflict type="erroneous gene model prediction">
        <sequence resource="EMBL-CDS" id="AAG10625"/>
    </conflict>
</comment>